<gene>
    <name evidence="1" type="primary">gpmA</name>
    <name type="synonym">gpm</name>
    <name type="synonym">pgm</name>
    <name type="ordered locus">ZMO1240</name>
</gene>
<dbReference type="EC" id="5.4.2.11" evidence="1"/>
<dbReference type="EMBL" id="L09651">
    <property type="protein sequence ID" value="AAA71937.1"/>
    <property type="molecule type" value="Unassigned_DNA"/>
</dbReference>
<dbReference type="EMBL" id="L09649">
    <property type="protein sequence ID" value="AAA71932.2"/>
    <property type="molecule type" value="Genomic_DNA"/>
</dbReference>
<dbReference type="EMBL" id="L09650">
    <property type="protein sequence ID" value="AAA71933.1"/>
    <property type="molecule type" value="Genomic_DNA"/>
</dbReference>
<dbReference type="EMBL" id="AE008692">
    <property type="protein sequence ID" value="AAV89864.1"/>
    <property type="molecule type" value="Genomic_DNA"/>
</dbReference>
<dbReference type="PIR" id="C40649">
    <property type="entry name" value="C40649"/>
</dbReference>
<dbReference type="RefSeq" id="WP_011241054.1">
    <property type="nucleotide sequence ID" value="NZ_CP035711.1"/>
</dbReference>
<dbReference type="SMR" id="P30798"/>
<dbReference type="STRING" id="264203.ZMO1240"/>
<dbReference type="GeneID" id="79903637"/>
<dbReference type="KEGG" id="zmo:ZMO1240"/>
<dbReference type="eggNOG" id="COG0588">
    <property type="taxonomic scope" value="Bacteria"/>
</dbReference>
<dbReference type="HOGENOM" id="CLU_033323_1_5_5"/>
<dbReference type="SABIO-RK" id="P30798"/>
<dbReference type="UniPathway" id="UPA00109">
    <property type="reaction ID" value="UER00186"/>
</dbReference>
<dbReference type="Proteomes" id="UP000001173">
    <property type="component" value="Chromosome"/>
</dbReference>
<dbReference type="GO" id="GO:0004619">
    <property type="term" value="F:phosphoglycerate mutase activity"/>
    <property type="evidence" value="ECO:0007669"/>
    <property type="project" value="UniProtKB-EC"/>
</dbReference>
<dbReference type="GO" id="GO:0006094">
    <property type="term" value="P:gluconeogenesis"/>
    <property type="evidence" value="ECO:0007669"/>
    <property type="project" value="UniProtKB-UniRule"/>
</dbReference>
<dbReference type="GO" id="GO:0006096">
    <property type="term" value="P:glycolytic process"/>
    <property type="evidence" value="ECO:0007669"/>
    <property type="project" value="UniProtKB-UniRule"/>
</dbReference>
<dbReference type="CDD" id="cd07067">
    <property type="entry name" value="HP_PGM_like"/>
    <property type="match status" value="1"/>
</dbReference>
<dbReference type="FunFam" id="3.40.50.1240:FF:000003">
    <property type="entry name" value="2,3-bisphosphoglycerate-dependent phosphoglycerate mutase"/>
    <property type="match status" value="1"/>
</dbReference>
<dbReference type="Gene3D" id="3.40.50.1240">
    <property type="entry name" value="Phosphoglycerate mutase-like"/>
    <property type="match status" value="1"/>
</dbReference>
<dbReference type="HAMAP" id="MF_01039">
    <property type="entry name" value="PGAM_GpmA"/>
    <property type="match status" value="1"/>
</dbReference>
<dbReference type="InterPro" id="IPR013078">
    <property type="entry name" value="His_Pase_superF_clade-1"/>
</dbReference>
<dbReference type="InterPro" id="IPR029033">
    <property type="entry name" value="His_PPase_superfam"/>
</dbReference>
<dbReference type="InterPro" id="IPR001345">
    <property type="entry name" value="PG/BPGM_mutase_AS"/>
</dbReference>
<dbReference type="InterPro" id="IPR005952">
    <property type="entry name" value="Phosphogly_mut1"/>
</dbReference>
<dbReference type="NCBIfam" id="TIGR01258">
    <property type="entry name" value="pgm_1"/>
    <property type="match status" value="1"/>
</dbReference>
<dbReference type="NCBIfam" id="NF010713">
    <property type="entry name" value="PRK14115.1"/>
    <property type="match status" value="1"/>
</dbReference>
<dbReference type="PANTHER" id="PTHR11931">
    <property type="entry name" value="PHOSPHOGLYCERATE MUTASE"/>
    <property type="match status" value="1"/>
</dbReference>
<dbReference type="Pfam" id="PF00300">
    <property type="entry name" value="His_Phos_1"/>
    <property type="match status" value="2"/>
</dbReference>
<dbReference type="PIRSF" id="PIRSF000709">
    <property type="entry name" value="6PFK_2-Ptase"/>
    <property type="match status" value="1"/>
</dbReference>
<dbReference type="SMART" id="SM00855">
    <property type="entry name" value="PGAM"/>
    <property type="match status" value="1"/>
</dbReference>
<dbReference type="SUPFAM" id="SSF53254">
    <property type="entry name" value="Phosphoglycerate mutase-like"/>
    <property type="match status" value="1"/>
</dbReference>
<dbReference type="PROSITE" id="PS00175">
    <property type="entry name" value="PG_MUTASE"/>
    <property type="match status" value="1"/>
</dbReference>
<sequence length="228" mass="25938">MPTLVLSRHGQSEWNLENRFTGWWDVNLTEQGVQEATAGGKALAEKGFEFDIAFTSVLTRAIKTTNLILEAGKTLWVPTEKDWRLNERHYGGLTGLNKAETAAKHGEEQVHIWRRSYDVPPPPMEKGSKFDLSGDRRYDGVKIPETESLKDTVARVLPYWEERIAPELKAGKRVLIGAHGNSLRALVKHLSKLSDEEIVKFELPTGQPLVYELNDDLTPKDRYFLNER</sequence>
<keyword id="KW-0903">Direct protein sequencing</keyword>
<keyword id="KW-0312">Gluconeogenesis</keyword>
<keyword id="KW-0324">Glycolysis</keyword>
<keyword id="KW-0413">Isomerase</keyword>
<keyword id="KW-1185">Reference proteome</keyword>
<name>GPMA_ZYMMO</name>
<protein>
    <recommendedName>
        <fullName evidence="1">2,3-bisphosphoglycerate-dependent phosphoglycerate mutase</fullName>
        <shortName evidence="1">BPG-dependent PGAM</shortName>
        <shortName evidence="1">PGAM</shortName>
        <shortName evidence="1">Phosphoglyceromutase</shortName>
        <shortName evidence="1">dPGM</shortName>
        <ecNumber evidence="1">5.4.2.11</ecNumber>
    </recommendedName>
</protein>
<comment type="function">
    <text evidence="1">Catalyzes the interconversion of 2-phosphoglycerate and 3-phosphoglycerate.</text>
</comment>
<comment type="catalytic activity">
    <reaction evidence="1">
        <text>(2R)-2-phosphoglycerate = (2R)-3-phosphoglycerate</text>
        <dbReference type="Rhea" id="RHEA:15901"/>
        <dbReference type="ChEBI" id="CHEBI:58272"/>
        <dbReference type="ChEBI" id="CHEBI:58289"/>
        <dbReference type="EC" id="5.4.2.11"/>
    </reaction>
</comment>
<comment type="pathway">
    <text evidence="1">Carbohydrate degradation; glycolysis; pyruvate from D-glyceraldehyde 3-phosphate: step 3/5.</text>
</comment>
<comment type="subunit">
    <text evidence="1">Homodimer.</text>
</comment>
<comment type="similarity">
    <text evidence="1">Belongs to the phosphoglycerate mutase family. BPG-dependent PGAM subfamily.</text>
</comment>
<reference key="1">
    <citation type="journal article" date="1993" name="J. Bacteriol.">
        <title>Cloning, sequencing, and expression of the Zymomonas mobilis phosphoglycerate mutase gene (pgm) in Escherichia coli.</title>
        <authorList>
            <person name="Yomano L.P."/>
            <person name="Scopes R.K."/>
            <person name="Ingram L.O."/>
        </authorList>
    </citation>
    <scope>NUCLEOTIDE SEQUENCE [GENOMIC DNA]</scope>
    <scope>PROTEIN SEQUENCE OF 1-40</scope>
    <source>
        <strain>ATCC 31821 / ZM4 / CP4</strain>
    </source>
</reference>
<reference key="2">
    <citation type="journal article" date="2005" name="Nat. Biotechnol.">
        <title>The genome sequence of the ethanologenic bacterium Zymomonas mobilis ZM4.</title>
        <authorList>
            <person name="Seo J.-S."/>
            <person name="Chong H."/>
            <person name="Park H.S."/>
            <person name="Yoon K.-O."/>
            <person name="Jung C."/>
            <person name="Kim J.J."/>
            <person name="Hong J.H."/>
            <person name="Kim H."/>
            <person name="Kim J.-H."/>
            <person name="Kil J.-I."/>
            <person name="Park C.J."/>
            <person name="Oh H.-M."/>
            <person name="Lee J.-S."/>
            <person name="Jin S.-J."/>
            <person name="Um H.-W."/>
            <person name="Lee H.-J."/>
            <person name="Oh S.-J."/>
            <person name="Kim J.Y."/>
            <person name="Kang H.L."/>
            <person name="Lee S.Y."/>
            <person name="Lee K.J."/>
            <person name="Kang H.S."/>
        </authorList>
    </citation>
    <scope>NUCLEOTIDE SEQUENCE [LARGE SCALE GENOMIC DNA]</scope>
    <source>
        <strain>ATCC 31821 / ZM4 / CP4</strain>
    </source>
</reference>
<accession>P30798</accession>
<accession>Q5NN46</accession>
<feature type="chain" id="PRO_0000179943" description="2,3-bisphosphoglycerate-dependent phosphoglycerate mutase">
    <location>
        <begin position="1"/>
        <end position="228"/>
    </location>
</feature>
<feature type="active site" description="Tele-phosphohistidine intermediate" evidence="1">
    <location>
        <position position="9"/>
    </location>
</feature>
<feature type="active site" description="Proton donor/acceptor" evidence="1">
    <location>
        <position position="87"/>
    </location>
</feature>
<feature type="binding site" evidence="1">
    <location>
        <begin position="8"/>
        <end position="15"/>
    </location>
    <ligand>
        <name>substrate</name>
    </ligand>
</feature>
<feature type="binding site" evidence="1">
    <location>
        <begin position="21"/>
        <end position="22"/>
    </location>
    <ligand>
        <name>substrate</name>
    </ligand>
</feature>
<feature type="binding site" evidence="1">
    <location>
        <position position="60"/>
    </location>
    <ligand>
        <name>substrate</name>
    </ligand>
</feature>
<feature type="binding site" evidence="1">
    <location>
        <begin position="87"/>
        <end position="90"/>
    </location>
    <ligand>
        <name>substrate</name>
    </ligand>
</feature>
<feature type="binding site" evidence="1">
    <location>
        <position position="98"/>
    </location>
    <ligand>
        <name>substrate</name>
    </ligand>
</feature>
<feature type="binding site" evidence="1">
    <location>
        <begin position="114"/>
        <end position="115"/>
    </location>
    <ligand>
        <name>substrate</name>
    </ligand>
</feature>
<feature type="binding site" evidence="1">
    <location>
        <begin position="180"/>
        <end position="181"/>
    </location>
    <ligand>
        <name>substrate</name>
    </ligand>
</feature>
<feature type="site" description="Transition state stabilizer" evidence="1">
    <location>
        <position position="179"/>
    </location>
</feature>
<proteinExistence type="evidence at protein level"/>
<evidence type="ECO:0000255" key="1">
    <source>
        <dbReference type="HAMAP-Rule" id="MF_01039"/>
    </source>
</evidence>
<organism>
    <name type="scientific">Zymomonas mobilis subsp. mobilis (strain ATCC 31821 / ZM4 / CP4)</name>
    <dbReference type="NCBI Taxonomy" id="264203"/>
    <lineage>
        <taxon>Bacteria</taxon>
        <taxon>Pseudomonadati</taxon>
        <taxon>Pseudomonadota</taxon>
        <taxon>Alphaproteobacteria</taxon>
        <taxon>Sphingomonadales</taxon>
        <taxon>Zymomonadaceae</taxon>
        <taxon>Zymomonas</taxon>
    </lineage>
</organism>